<accession>Q7U4D4</accession>
<name>RS12_PARMW</name>
<reference key="1">
    <citation type="journal article" date="2003" name="Nature">
        <title>The genome of a motile marine Synechococcus.</title>
        <authorList>
            <person name="Palenik B."/>
            <person name="Brahamsha B."/>
            <person name="Larimer F.W."/>
            <person name="Land M.L."/>
            <person name="Hauser L."/>
            <person name="Chain P."/>
            <person name="Lamerdin J.E."/>
            <person name="Regala W."/>
            <person name="Allen E.E."/>
            <person name="McCarren J."/>
            <person name="Paulsen I.T."/>
            <person name="Dufresne A."/>
            <person name="Partensky F."/>
            <person name="Webb E.A."/>
            <person name="Waterbury J."/>
        </authorList>
    </citation>
    <scope>NUCLEOTIDE SEQUENCE [LARGE SCALE GENOMIC DNA]</scope>
    <source>
        <strain>WH8102</strain>
    </source>
</reference>
<comment type="function">
    <text evidence="2">With S4 and S5 plays an important role in translational accuracy.</text>
</comment>
<comment type="function">
    <text evidence="2">Interacts with and stabilizes bases of the 16S rRNA that are involved in tRNA selection in the A site and with the mRNA backbone. Located at the interface of the 30S and 50S subunits, it traverses the body of the 30S subunit contacting proteins on the other side and probably holding the rRNA structure together. The combined cluster of proteins S8, S12 and S17 appears to hold together the shoulder and platform of the 30S subunit.</text>
</comment>
<comment type="subunit">
    <text evidence="2">Part of the 30S ribosomal subunit. Contacts proteins S8 and S17. May interact with IF1 in the 30S initiation complex.</text>
</comment>
<comment type="similarity">
    <text evidence="2">Belongs to the universal ribosomal protein uS12 family.</text>
</comment>
<dbReference type="EMBL" id="BX569694">
    <property type="protein sequence ID" value="CAE08650.1"/>
    <property type="molecule type" value="Genomic_DNA"/>
</dbReference>
<dbReference type="RefSeq" id="WP_011128991.1">
    <property type="nucleotide sequence ID" value="NC_005070.1"/>
</dbReference>
<dbReference type="SMR" id="Q7U4D4"/>
<dbReference type="STRING" id="84588.SYNW2135"/>
<dbReference type="KEGG" id="syw:SYNW2135"/>
<dbReference type="eggNOG" id="COG0048">
    <property type="taxonomic scope" value="Bacteria"/>
</dbReference>
<dbReference type="HOGENOM" id="CLU_104295_1_2_3"/>
<dbReference type="Proteomes" id="UP000001422">
    <property type="component" value="Chromosome"/>
</dbReference>
<dbReference type="GO" id="GO:0015935">
    <property type="term" value="C:small ribosomal subunit"/>
    <property type="evidence" value="ECO:0007669"/>
    <property type="project" value="InterPro"/>
</dbReference>
<dbReference type="GO" id="GO:0019843">
    <property type="term" value="F:rRNA binding"/>
    <property type="evidence" value="ECO:0007669"/>
    <property type="project" value="UniProtKB-UniRule"/>
</dbReference>
<dbReference type="GO" id="GO:0003735">
    <property type="term" value="F:structural constituent of ribosome"/>
    <property type="evidence" value="ECO:0007669"/>
    <property type="project" value="InterPro"/>
</dbReference>
<dbReference type="GO" id="GO:0000049">
    <property type="term" value="F:tRNA binding"/>
    <property type="evidence" value="ECO:0007669"/>
    <property type="project" value="UniProtKB-UniRule"/>
</dbReference>
<dbReference type="GO" id="GO:0006412">
    <property type="term" value="P:translation"/>
    <property type="evidence" value="ECO:0007669"/>
    <property type="project" value="UniProtKB-UniRule"/>
</dbReference>
<dbReference type="CDD" id="cd03368">
    <property type="entry name" value="Ribosomal_S12"/>
    <property type="match status" value="1"/>
</dbReference>
<dbReference type="FunFam" id="2.40.50.140:FF:000001">
    <property type="entry name" value="30S ribosomal protein S12"/>
    <property type="match status" value="1"/>
</dbReference>
<dbReference type="Gene3D" id="2.40.50.140">
    <property type="entry name" value="Nucleic acid-binding proteins"/>
    <property type="match status" value="1"/>
</dbReference>
<dbReference type="HAMAP" id="MF_00403_B">
    <property type="entry name" value="Ribosomal_uS12_B"/>
    <property type="match status" value="1"/>
</dbReference>
<dbReference type="InterPro" id="IPR012340">
    <property type="entry name" value="NA-bd_OB-fold"/>
</dbReference>
<dbReference type="InterPro" id="IPR006032">
    <property type="entry name" value="Ribosomal_uS12"/>
</dbReference>
<dbReference type="InterPro" id="IPR005679">
    <property type="entry name" value="Ribosomal_uS12_bac"/>
</dbReference>
<dbReference type="NCBIfam" id="TIGR00981">
    <property type="entry name" value="rpsL_bact"/>
    <property type="match status" value="1"/>
</dbReference>
<dbReference type="PANTHER" id="PTHR11652">
    <property type="entry name" value="30S RIBOSOMAL PROTEIN S12 FAMILY MEMBER"/>
    <property type="match status" value="1"/>
</dbReference>
<dbReference type="Pfam" id="PF00164">
    <property type="entry name" value="Ribosom_S12_S23"/>
    <property type="match status" value="1"/>
</dbReference>
<dbReference type="PIRSF" id="PIRSF002133">
    <property type="entry name" value="Ribosomal_S12/S23"/>
    <property type="match status" value="1"/>
</dbReference>
<dbReference type="PRINTS" id="PR01034">
    <property type="entry name" value="RIBOSOMALS12"/>
</dbReference>
<dbReference type="SUPFAM" id="SSF50249">
    <property type="entry name" value="Nucleic acid-binding proteins"/>
    <property type="match status" value="1"/>
</dbReference>
<dbReference type="PROSITE" id="PS00055">
    <property type="entry name" value="RIBOSOMAL_S12"/>
    <property type="match status" value="1"/>
</dbReference>
<protein>
    <recommendedName>
        <fullName evidence="2">Small ribosomal subunit protein uS12</fullName>
    </recommendedName>
    <alternativeName>
        <fullName evidence="4">30S ribosomal protein S12</fullName>
    </alternativeName>
</protein>
<sequence length="124" mass="13824">MPTIQQLIRTERSRLKAKTKSPALKSCPERRGVCTRVYTSTPKKPNSALRKVARVRLTSGFEVTAYIGGVGHNLQEHSVVLIRGGRVKDLPGVRYHIIRGTLDTAGVKDRRQSRSKYGAKTPKE</sequence>
<gene>
    <name evidence="2" type="primary">rpsL</name>
    <name evidence="2" type="synonym">rps12</name>
    <name type="ordered locus">SYNW2135</name>
</gene>
<evidence type="ECO:0000250" key="1"/>
<evidence type="ECO:0000255" key="2">
    <source>
        <dbReference type="HAMAP-Rule" id="MF_00403"/>
    </source>
</evidence>
<evidence type="ECO:0000256" key="3">
    <source>
        <dbReference type="SAM" id="MobiDB-lite"/>
    </source>
</evidence>
<evidence type="ECO:0000305" key="4"/>
<keyword id="KW-0488">Methylation</keyword>
<keyword id="KW-0687">Ribonucleoprotein</keyword>
<keyword id="KW-0689">Ribosomal protein</keyword>
<keyword id="KW-0694">RNA-binding</keyword>
<keyword id="KW-0699">rRNA-binding</keyword>
<keyword id="KW-0820">tRNA-binding</keyword>
<feature type="chain" id="PRO_0000146337" description="Small ribosomal subunit protein uS12">
    <location>
        <begin position="1"/>
        <end position="124"/>
    </location>
</feature>
<feature type="region of interest" description="Disordered" evidence="3">
    <location>
        <begin position="104"/>
        <end position="124"/>
    </location>
</feature>
<feature type="modified residue" description="3-methylthioaspartic acid" evidence="1">
    <location>
        <position position="89"/>
    </location>
</feature>
<proteinExistence type="inferred from homology"/>
<organism>
    <name type="scientific">Parasynechococcus marenigrum (strain WH8102)</name>
    <dbReference type="NCBI Taxonomy" id="84588"/>
    <lineage>
        <taxon>Bacteria</taxon>
        <taxon>Bacillati</taxon>
        <taxon>Cyanobacteriota</taxon>
        <taxon>Cyanophyceae</taxon>
        <taxon>Synechococcales</taxon>
        <taxon>Prochlorococcaceae</taxon>
        <taxon>Parasynechococcus</taxon>
        <taxon>Parasynechococcus marenigrum</taxon>
    </lineage>
</organism>